<accession>Q9VS77</accession>
<evidence type="ECO:0000250" key="1">
    <source>
        <dbReference type="UniProtKB" id="O97148"/>
    </source>
</evidence>
<evidence type="ECO:0000255" key="2"/>
<evidence type="ECO:0000305" key="3"/>
<proteinExistence type="inferred from homology"/>
<name>MTH6_DROME</name>
<keyword id="KW-1003">Cell membrane</keyword>
<keyword id="KW-1015">Disulfide bond</keyword>
<keyword id="KW-0297">G-protein coupled receptor</keyword>
<keyword id="KW-0325">Glycoprotein</keyword>
<keyword id="KW-0472">Membrane</keyword>
<keyword id="KW-0675">Receptor</keyword>
<keyword id="KW-1185">Reference proteome</keyword>
<keyword id="KW-0732">Signal</keyword>
<keyword id="KW-0807">Transducer</keyword>
<keyword id="KW-0812">Transmembrane</keyword>
<keyword id="KW-1133">Transmembrane helix</keyword>
<feature type="signal peptide" evidence="2">
    <location>
        <begin position="1"/>
        <end position="20"/>
    </location>
</feature>
<feature type="chain" id="PRO_0000013027" description="Probable G-protein coupled receptor Mth-like 6">
    <location>
        <begin position="21"/>
        <end position="480"/>
    </location>
</feature>
<feature type="topological domain" description="Extracellular" evidence="2">
    <location>
        <begin position="21"/>
        <end position="202"/>
    </location>
</feature>
<feature type="transmembrane region" description="Helical; Name=1" evidence="2">
    <location>
        <begin position="203"/>
        <end position="225"/>
    </location>
</feature>
<feature type="topological domain" description="Cytoplasmic" evidence="2">
    <location>
        <begin position="226"/>
        <end position="231"/>
    </location>
</feature>
<feature type="transmembrane region" description="Helical; Name=2" evidence="2">
    <location>
        <begin position="232"/>
        <end position="254"/>
    </location>
</feature>
<feature type="topological domain" description="Extracellular" evidence="2">
    <location>
        <begin position="255"/>
        <end position="263"/>
    </location>
</feature>
<feature type="transmembrane region" description="Helical; Name=3" evidence="2">
    <location>
        <begin position="264"/>
        <end position="283"/>
    </location>
</feature>
<feature type="topological domain" description="Cytoplasmic" evidence="2">
    <location>
        <begin position="284"/>
        <end position="303"/>
    </location>
</feature>
<feature type="transmembrane region" description="Helical; Name=4" evidence="2">
    <location>
        <begin position="304"/>
        <end position="326"/>
    </location>
</feature>
<feature type="topological domain" description="Extracellular" evidence="2">
    <location>
        <begin position="327"/>
        <end position="356"/>
    </location>
</feature>
<feature type="transmembrane region" description="Helical; Name=5" evidence="2">
    <location>
        <begin position="357"/>
        <end position="379"/>
    </location>
</feature>
<feature type="topological domain" description="Cytoplasmic" evidence="2">
    <location>
        <begin position="380"/>
        <end position="405"/>
    </location>
</feature>
<feature type="transmembrane region" description="Helical; Name=6" evidence="2">
    <location>
        <begin position="406"/>
        <end position="428"/>
    </location>
</feature>
<feature type="topological domain" description="Extracellular" evidence="2">
    <location>
        <begin position="429"/>
        <end position="437"/>
    </location>
</feature>
<feature type="transmembrane region" description="Helical; Name=7" evidence="2">
    <location>
        <begin position="438"/>
        <end position="457"/>
    </location>
</feature>
<feature type="topological domain" description="Cytoplasmic" evidence="2">
    <location>
        <begin position="458"/>
        <end position="480"/>
    </location>
</feature>
<feature type="glycosylation site" description="N-linked (GlcNAc...) asparagine" evidence="2">
    <location>
        <position position="40"/>
    </location>
</feature>
<feature type="glycosylation site" description="N-linked (GlcNAc...) asparagine" evidence="2">
    <location>
        <position position="160"/>
    </location>
</feature>
<feature type="glycosylation site" description="N-linked (GlcNAc...) asparagine" evidence="2">
    <location>
        <position position="170"/>
    </location>
</feature>
<feature type="disulfide bond" evidence="1">
    <location>
        <begin position="25"/>
        <end position="78"/>
    </location>
</feature>
<feature type="disulfide bond" evidence="1">
    <location>
        <begin position="80"/>
        <end position="85"/>
    </location>
</feature>
<feature type="disulfide bond" evidence="1">
    <location>
        <begin position="89"/>
        <end position="179"/>
    </location>
</feature>
<feature type="disulfide bond" evidence="1">
    <location>
        <begin position="90"/>
        <end position="101"/>
    </location>
</feature>
<gene>
    <name type="primary">mthl6</name>
    <name type="ORF">CG16992</name>
</gene>
<dbReference type="EMBL" id="AE014296">
    <property type="protein sequence ID" value="AAO41272.1"/>
    <property type="molecule type" value="Genomic_DNA"/>
</dbReference>
<dbReference type="RefSeq" id="NP_788473.1">
    <property type="nucleotide sequence ID" value="NM_176295.2"/>
</dbReference>
<dbReference type="SMR" id="Q9VS77"/>
<dbReference type="FunCoup" id="Q9VS77">
    <property type="interactions" value="10"/>
</dbReference>
<dbReference type="STRING" id="7227.FBpp0076503"/>
<dbReference type="GlyCosmos" id="Q9VS77">
    <property type="glycosylation" value="3 sites, No reported glycans"/>
</dbReference>
<dbReference type="GlyGen" id="Q9VS77">
    <property type="glycosylation" value="3 sites"/>
</dbReference>
<dbReference type="PaxDb" id="7227-FBpp0076503"/>
<dbReference type="EnsemblMetazoa" id="FBtr0076789">
    <property type="protein sequence ID" value="FBpp0076503"/>
    <property type="gene ID" value="FBgn0035789"/>
</dbReference>
<dbReference type="GeneID" id="38839"/>
<dbReference type="KEGG" id="dme:Dmel_CG16992"/>
<dbReference type="AGR" id="FB:FBgn0035789"/>
<dbReference type="CTD" id="38839"/>
<dbReference type="FlyBase" id="FBgn0035789">
    <property type="gene designation" value="mthl6"/>
</dbReference>
<dbReference type="VEuPathDB" id="VectorBase:FBgn0035789"/>
<dbReference type="eggNOG" id="KOG4193">
    <property type="taxonomic scope" value="Eukaryota"/>
</dbReference>
<dbReference type="GeneTree" id="ENSGT00940000166745"/>
<dbReference type="HOGENOM" id="CLU_002753_3_0_1"/>
<dbReference type="InParanoid" id="Q9VS77"/>
<dbReference type="OMA" id="RCWINTY"/>
<dbReference type="OrthoDB" id="7820827at2759"/>
<dbReference type="PhylomeDB" id="Q9VS77"/>
<dbReference type="BioGRID-ORCS" id="38839">
    <property type="hits" value="0 hits in 1 CRISPR screen"/>
</dbReference>
<dbReference type="GenomeRNAi" id="38839"/>
<dbReference type="PRO" id="PR:Q9VS77"/>
<dbReference type="Proteomes" id="UP000000803">
    <property type="component" value="Chromosome 3L"/>
</dbReference>
<dbReference type="Bgee" id="FBgn0035789">
    <property type="expression patterns" value="Expressed in embryonic/larval hemocyte (Drosophila) and 5 other cell types or tissues"/>
</dbReference>
<dbReference type="GO" id="GO:0016020">
    <property type="term" value="C:membrane"/>
    <property type="evidence" value="ECO:0000250"/>
    <property type="project" value="FlyBase"/>
</dbReference>
<dbReference type="GO" id="GO:0005886">
    <property type="term" value="C:plasma membrane"/>
    <property type="evidence" value="ECO:0000318"/>
    <property type="project" value="GO_Central"/>
</dbReference>
<dbReference type="GO" id="GO:0008528">
    <property type="term" value="F:G protein-coupled peptide receptor activity"/>
    <property type="evidence" value="ECO:0000318"/>
    <property type="project" value="GO_Central"/>
</dbReference>
<dbReference type="GO" id="GO:0004930">
    <property type="term" value="F:G protein-coupled receptor activity"/>
    <property type="evidence" value="ECO:0000250"/>
    <property type="project" value="FlyBase"/>
</dbReference>
<dbReference type="GO" id="GO:0007166">
    <property type="term" value="P:cell surface receptor signaling pathway"/>
    <property type="evidence" value="ECO:0007669"/>
    <property type="project" value="InterPro"/>
</dbReference>
<dbReference type="GO" id="GO:0008340">
    <property type="term" value="P:determination of adult lifespan"/>
    <property type="evidence" value="ECO:0000250"/>
    <property type="project" value="UniProtKB"/>
</dbReference>
<dbReference type="GO" id="GO:0007186">
    <property type="term" value="P:G protein-coupled receptor signaling pathway"/>
    <property type="evidence" value="ECO:0000250"/>
    <property type="project" value="FlyBase"/>
</dbReference>
<dbReference type="GO" id="GO:0042594">
    <property type="term" value="P:response to starvation"/>
    <property type="evidence" value="ECO:0000250"/>
    <property type="project" value="UniProtKB"/>
</dbReference>
<dbReference type="CDD" id="cd15039">
    <property type="entry name" value="7tmB3_Methuselah-like"/>
    <property type="match status" value="1"/>
</dbReference>
<dbReference type="CDD" id="cd00251">
    <property type="entry name" value="Mth_Ecto"/>
    <property type="match status" value="1"/>
</dbReference>
<dbReference type="FunFam" id="1.20.1070.10:FF:000297">
    <property type="entry name" value="G-protein coupled receptor Mth"/>
    <property type="match status" value="1"/>
</dbReference>
<dbReference type="FunFam" id="2.170.180.11:FF:000001">
    <property type="entry name" value="G-protein coupled receptor Mth"/>
    <property type="match status" value="1"/>
</dbReference>
<dbReference type="FunFam" id="2.30.160.11:FF:000001">
    <property type="entry name" value="G-protein coupled receptor Mth"/>
    <property type="match status" value="1"/>
</dbReference>
<dbReference type="Gene3D" id="2.30.160.11">
    <property type="match status" value="1"/>
</dbReference>
<dbReference type="Gene3D" id="2.170.180.11">
    <property type="entry name" value="Methuselah ectodomain, domain 2"/>
    <property type="match status" value="1"/>
</dbReference>
<dbReference type="Gene3D" id="1.20.1070.10">
    <property type="entry name" value="Rhodopsin 7-helix transmembrane proteins"/>
    <property type="match status" value="1"/>
</dbReference>
<dbReference type="InterPro" id="IPR022343">
    <property type="entry name" value="GCR1-cAMP_receptor"/>
</dbReference>
<dbReference type="InterPro" id="IPR017981">
    <property type="entry name" value="GPCR_2-like_7TM"/>
</dbReference>
<dbReference type="InterPro" id="IPR000832">
    <property type="entry name" value="GPCR_2_secretin-like"/>
</dbReference>
<dbReference type="InterPro" id="IPR044860">
    <property type="entry name" value="Methusela_ecto_dom_1"/>
</dbReference>
<dbReference type="InterPro" id="IPR023311">
    <property type="entry name" value="Methusela_ecto_dom_2"/>
</dbReference>
<dbReference type="InterPro" id="IPR010596">
    <property type="entry name" value="Methuselah_N_dom"/>
</dbReference>
<dbReference type="InterPro" id="IPR036272">
    <property type="entry name" value="Methuselah_N_sf"/>
</dbReference>
<dbReference type="InterPro" id="IPR051384">
    <property type="entry name" value="Mth_GPCR"/>
</dbReference>
<dbReference type="PANTHER" id="PTHR47154">
    <property type="entry name" value="G-PROTEIN COUPLED RECEPTOR MTH-RELATED"/>
    <property type="match status" value="1"/>
</dbReference>
<dbReference type="PANTHER" id="PTHR47154:SF2">
    <property type="entry name" value="G-PROTEIN COUPLED RECEPTOR MTH-RELATED"/>
    <property type="match status" value="1"/>
</dbReference>
<dbReference type="Pfam" id="PF00002">
    <property type="entry name" value="7tm_2"/>
    <property type="match status" value="1"/>
</dbReference>
<dbReference type="Pfam" id="PF06652">
    <property type="entry name" value="Methuselah_N"/>
    <property type="match status" value="1"/>
</dbReference>
<dbReference type="PRINTS" id="PR02001">
    <property type="entry name" value="GCR1CAMPR"/>
</dbReference>
<dbReference type="SUPFAM" id="SSF63877">
    <property type="entry name" value="Methuselah ectodomain"/>
    <property type="match status" value="1"/>
</dbReference>
<dbReference type="PROSITE" id="PS50261">
    <property type="entry name" value="G_PROTEIN_RECEP_F2_4"/>
    <property type="match status" value="1"/>
</dbReference>
<organism>
    <name type="scientific">Drosophila melanogaster</name>
    <name type="common">Fruit fly</name>
    <dbReference type="NCBI Taxonomy" id="7227"/>
    <lineage>
        <taxon>Eukaryota</taxon>
        <taxon>Metazoa</taxon>
        <taxon>Ecdysozoa</taxon>
        <taxon>Arthropoda</taxon>
        <taxon>Hexapoda</taxon>
        <taxon>Insecta</taxon>
        <taxon>Pterygota</taxon>
        <taxon>Neoptera</taxon>
        <taxon>Endopterygota</taxon>
        <taxon>Diptera</taxon>
        <taxon>Brachycera</taxon>
        <taxon>Muscomorpha</taxon>
        <taxon>Ephydroidea</taxon>
        <taxon>Drosophilidae</taxon>
        <taxon>Drosophila</taxon>
        <taxon>Sophophora</taxon>
    </lineage>
</organism>
<comment type="subcellular location">
    <subcellularLocation>
        <location evidence="3">Cell membrane</location>
        <topology evidence="3">Multi-pass membrane protein</topology>
    </subcellularLocation>
</comment>
<comment type="similarity">
    <text evidence="3">Belongs to the G-protein coupled receptor 2 family. Mth subfamily.</text>
</comment>
<reference key="1">
    <citation type="journal article" date="2000" name="Science">
        <title>The genome sequence of Drosophila melanogaster.</title>
        <authorList>
            <person name="Adams M.D."/>
            <person name="Celniker S.E."/>
            <person name="Holt R.A."/>
            <person name="Evans C.A."/>
            <person name="Gocayne J.D."/>
            <person name="Amanatides P.G."/>
            <person name="Scherer S.E."/>
            <person name="Li P.W."/>
            <person name="Hoskins R.A."/>
            <person name="Galle R.F."/>
            <person name="George R.A."/>
            <person name="Lewis S.E."/>
            <person name="Richards S."/>
            <person name="Ashburner M."/>
            <person name="Henderson S.N."/>
            <person name="Sutton G.G."/>
            <person name="Wortman J.R."/>
            <person name="Yandell M.D."/>
            <person name="Zhang Q."/>
            <person name="Chen L.X."/>
            <person name="Brandon R.C."/>
            <person name="Rogers Y.-H.C."/>
            <person name="Blazej R.G."/>
            <person name="Champe M."/>
            <person name="Pfeiffer B.D."/>
            <person name="Wan K.H."/>
            <person name="Doyle C."/>
            <person name="Baxter E.G."/>
            <person name="Helt G."/>
            <person name="Nelson C.R."/>
            <person name="Miklos G.L.G."/>
            <person name="Abril J.F."/>
            <person name="Agbayani A."/>
            <person name="An H.-J."/>
            <person name="Andrews-Pfannkoch C."/>
            <person name="Baldwin D."/>
            <person name="Ballew R.M."/>
            <person name="Basu A."/>
            <person name="Baxendale J."/>
            <person name="Bayraktaroglu L."/>
            <person name="Beasley E.M."/>
            <person name="Beeson K.Y."/>
            <person name="Benos P.V."/>
            <person name="Berman B.P."/>
            <person name="Bhandari D."/>
            <person name="Bolshakov S."/>
            <person name="Borkova D."/>
            <person name="Botchan M.R."/>
            <person name="Bouck J."/>
            <person name="Brokstein P."/>
            <person name="Brottier P."/>
            <person name="Burtis K.C."/>
            <person name="Busam D.A."/>
            <person name="Butler H."/>
            <person name="Cadieu E."/>
            <person name="Center A."/>
            <person name="Chandra I."/>
            <person name="Cherry J.M."/>
            <person name="Cawley S."/>
            <person name="Dahlke C."/>
            <person name="Davenport L.B."/>
            <person name="Davies P."/>
            <person name="de Pablos B."/>
            <person name="Delcher A."/>
            <person name="Deng Z."/>
            <person name="Mays A.D."/>
            <person name="Dew I."/>
            <person name="Dietz S.M."/>
            <person name="Dodson K."/>
            <person name="Doup L.E."/>
            <person name="Downes M."/>
            <person name="Dugan-Rocha S."/>
            <person name="Dunkov B.C."/>
            <person name="Dunn P."/>
            <person name="Durbin K.J."/>
            <person name="Evangelista C.C."/>
            <person name="Ferraz C."/>
            <person name="Ferriera S."/>
            <person name="Fleischmann W."/>
            <person name="Fosler C."/>
            <person name="Gabrielian A.E."/>
            <person name="Garg N.S."/>
            <person name="Gelbart W.M."/>
            <person name="Glasser K."/>
            <person name="Glodek A."/>
            <person name="Gong F."/>
            <person name="Gorrell J.H."/>
            <person name="Gu Z."/>
            <person name="Guan P."/>
            <person name="Harris M."/>
            <person name="Harris N.L."/>
            <person name="Harvey D.A."/>
            <person name="Heiman T.J."/>
            <person name="Hernandez J.R."/>
            <person name="Houck J."/>
            <person name="Hostin D."/>
            <person name="Houston K.A."/>
            <person name="Howland T.J."/>
            <person name="Wei M.-H."/>
            <person name="Ibegwam C."/>
            <person name="Jalali M."/>
            <person name="Kalush F."/>
            <person name="Karpen G.H."/>
            <person name="Ke Z."/>
            <person name="Kennison J.A."/>
            <person name="Ketchum K.A."/>
            <person name="Kimmel B.E."/>
            <person name="Kodira C.D."/>
            <person name="Kraft C.L."/>
            <person name="Kravitz S."/>
            <person name="Kulp D."/>
            <person name="Lai Z."/>
            <person name="Lasko P."/>
            <person name="Lei Y."/>
            <person name="Levitsky A.A."/>
            <person name="Li J.H."/>
            <person name="Li Z."/>
            <person name="Liang Y."/>
            <person name="Lin X."/>
            <person name="Liu X."/>
            <person name="Mattei B."/>
            <person name="McIntosh T.C."/>
            <person name="McLeod M.P."/>
            <person name="McPherson D."/>
            <person name="Merkulov G."/>
            <person name="Milshina N.V."/>
            <person name="Mobarry C."/>
            <person name="Morris J."/>
            <person name="Moshrefi A."/>
            <person name="Mount S.M."/>
            <person name="Moy M."/>
            <person name="Murphy B."/>
            <person name="Murphy L."/>
            <person name="Muzny D.M."/>
            <person name="Nelson D.L."/>
            <person name="Nelson D.R."/>
            <person name="Nelson K.A."/>
            <person name="Nixon K."/>
            <person name="Nusskern D.R."/>
            <person name="Pacleb J.M."/>
            <person name="Palazzolo M."/>
            <person name="Pittman G.S."/>
            <person name="Pan S."/>
            <person name="Pollard J."/>
            <person name="Puri V."/>
            <person name="Reese M.G."/>
            <person name="Reinert K."/>
            <person name="Remington K."/>
            <person name="Saunders R.D.C."/>
            <person name="Scheeler F."/>
            <person name="Shen H."/>
            <person name="Shue B.C."/>
            <person name="Siden-Kiamos I."/>
            <person name="Simpson M."/>
            <person name="Skupski M.P."/>
            <person name="Smith T.J."/>
            <person name="Spier E."/>
            <person name="Spradling A.C."/>
            <person name="Stapleton M."/>
            <person name="Strong R."/>
            <person name="Sun E."/>
            <person name="Svirskas R."/>
            <person name="Tector C."/>
            <person name="Turner R."/>
            <person name="Venter E."/>
            <person name="Wang A.H."/>
            <person name="Wang X."/>
            <person name="Wang Z.-Y."/>
            <person name="Wassarman D.A."/>
            <person name="Weinstock G.M."/>
            <person name="Weissenbach J."/>
            <person name="Williams S.M."/>
            <person name="Woodage T."/>
            <person name="Worley K.C."/>
            <person name="Wu D."/>
            <person name="Yang S."/>
            <person name="Yao Q.A."/>
            <person name="Ye J."/>
            <person name="Yeh R.-F."/>
            <person name="Zaveri J.S."/>
            <person name="Zhan M."/>
            <person name="Zhang G."/>
            <person name="Zhao Q."/>
            <person name="Zheng L."/>
            <person name="Zheng X.H."/>
            <person name="Zhong F.N."/>
            <person name="Zhong W."/>
            <person name="Zhou X."/>
            <person name="Zhu S.C."/>
            <person name="Zhu X."/>
            <person name="Smith H.O."/>
            <person name="Gibbs R.A."/>
            <person name="Myers E.W."/>
            <person name="Rubin G.M."/>
            <person name="Venter J.C."/>
        </authorList>
    </citation>
    <scope>NUCLEOTIDE SEQUENCE [LARGE SCALE GENOMIC DNA]</scope>
    <source>
        <strain>Berkeley</strain>
    </source>
</reference>
<reference key="2">
    <citation type="journal article" date="2002" name="Genome Biol.">
        <title>Annotation of the Drosophila melanogaster euchromatic genome: a systematic review.</title>
        <authorList>
            <person name="Misra S."/>
            <person name="Crosby M.A."/>
            <person name="Mungall C.J."/>
            <person name="Matthews B.B."/>
            <person name="Campbell K.S."/>
            <person name="Hradecky P."/>
            <person name="Huang Y."/>
            <person name="Kaminker J.S."/>
            <person name="Millburn G.H."/>
            <person name="Prochnik S.E."/>
            <person name="Smith C.D."/>
            <person name="Tupy J.L."/>
            <person name="Whitfield E.J."/>
            <person name="Bayraktaroglu L."/>
            <person name="Berman B.P."/>
            <person name="Bettencourt B.R."/>
            <person name="Celniker S.E."/>
            <person name="de Grey A.D.N.J."/>
            <person name="Drysdale R.A."/>
            <person name="Harris N.L."/>
            <person name="Richter J."/>
            <person name="Russo S."/>
            <person name="Schroeder A.J."/>
            <person name="Shu S.Q."/>
            <person name="Stapleton M."/>
            <person name="Yamada C."/>
            <person name="Ashburner M."/>
            <person name="Gelbart W.M."/>
            <person name="Rubin G.M."/>
            <person name="Lewis S.E."/>
        </authorList>
    </citation>
    <scope>GENOME REANNOTATION</scope>
    <source>
        <strain>Berkeley</strain>
    </source>
</reference>
<reference key="3">
    <citation type="journal article" date="2000" name="J. Cell Biol.">
        <title>Drosophila melanogaster G protein-coupled receptors.</title>
        <authorList>
            <person name="Brody T."/>
            <person name="Cravchik A."/>
        </authorList>
    </citation>
    <scope>REVIEW</scope>
</reference>
<sequence length="480" mass="56079">MLLNILAIILVFVISSQSEAVIPGCDYFDTVDISHIPKLNDSYAYEELIIPAHLTGLYTFRQLADGSQEPVKSHLRACICKLKPCIRFCCPRNKMMPNSRCSDGLTENLKRINPYLKITLEDGTIGKYYLLTDMIVLRYEFRYCEKVVSVQEDQYKLYENGSFMIKPDVNWTLSKQWYCLHPRLEDPNSIWILEHVYIPKSMPAVPQVGTISMVGCILTIAVYLYIKKLRNLLGKCFICYVFCKFVQYLIWAGGDLNLWNNICSLAGYTNYFFALASHFWLSVMSHQIWKNLRLINRDERSYHFLIYNIYGWGTPAIMTAITYLVDWAWEDRPDKLNWIPGVGLYRCWINTYDWSAMIYLYGPMLILSLFNVVTFILTVNHIMKIKSSVKSSTQQQRKCIQNNDFLLYLRLSVMMGVTGISEVITYFVKRHKFWRQVLRVPNFFHLGSGIVVFVLFILKRSTFQMIMERISGPRRQQPAS</sequence>
<protein>
    <recommendedName>
        <fullName>Probable G-protein coupled receptor Mth-like 6</fullName>
    </recommendedName>
    <alternativeName>
        <fullName>Protein methuselah-like 6</fullName>
    </alternativeName>
</protein>